<protein>
    <recommendedName>
        <fullName evidence="1">L-ribulose-5-phosphate 4-epimerase UlaF</fullName>
        <ecNumber evidence="1">5.1.3.4</ecNumber>
    </recommendedName>
    <alternativeName>
        <fullName evidence="1">L-ascorbate utilization protein F</fullName>
    </alternativeName>
    <alternativeName>
        <fullName evidence="1">Phosphoribulose isomerase</fullName>
    </alternativeName>
</protein>
<feature type="chain" id="PRO_1000188845" description="L-ribulose-5-phosphate 4-epimerase UlaF">
    <location>
        <begin position="1"/>
        <end position="228"/>
    </location>
</feature>
<feature type="active site" description="Proton donor/acceptor" evidence="1">
    <location>
        <position position="118"/>
    </location>
</feature>
<feature type="active site" description="Proton donor/acceptor" evidence="1">
    <location>
        <position position="225"/>
    </location>
</feature>
<feature type="binding site" evidence="1">
    <location>
        <begin position="26"/>
        <end position="27"/>
    </location>
    <ligand>
        <name>substrate</name>
    </ligand>
</feature>
<feature type="binding site" evidence="1">
    <location>
        <begin position="43"/>
        <end position="44"/>
    </location>
    <ligand>
        <name>substrate</name>
    </ligand>
</feature>
<feature type="binding site" evidence="1">
    <location>
        <begin position="72"/>
        <end position="73"/>
    </location>
    <ligand>
        <name>substrate</name>
    </ligand>
</feature>
<feature type="binding site" evidence="1">
    <location>
        <position position="74"/>
    </location>
    <ligand>
        <name>Zn(2+)</name>
        <dbReference type="ChEBI" id="CHEBI:29105"/>
    </ligand>
</feature>
<feature type="binding site" evidence="1">
    <location>
        <position position="93"/>
    </location>
    <ligand>
        <name>Zn(2+)</name>
        <dbReference type="ChEBI" id="CHEBI:29105"/>
    </ligand>
</feature>
<feature type="binding site" evidence="1">
    <location>
        <position position="95"/>
    </location>
    <ligand>
        <name>Zn(2+)</name>
        <dbReference type="ChEBI" id="CHEBI:29105"/>
    </ligand>
</feature>
<feature type="binding site" evidence="1">
    <location>
        <position position="167"/>
    </location>
    <ligand>
        <name>Zn(2+)</name>
        <dbReference type="ChEBI" id="CHEBI:29105"/>
    </ligand>
</feature>
<accession>B7M9G0</accession>
<comment type="function">
    <text evidence="1">Catalyzes the isomerization of L-ribulose 5-phosphate to D-xylulose 5-phosphate. Is involved in the anaerobic L-ascorbate utilization.</text>
</comment>
<comment type="catalytic activity">
    <reaction evidence="1">
        <text>L-ribulose 5-phosphate = D-xylulose 5-phosphate</text>
        <dbReference type="Rhea" id="RHEA:22368"/>
        <dbReference type="ChEBI" id="CHEBI:57737"/>
        <dbReference type="ChEBI" id="CHEBI:58226"/>
        <dbReference type="EC" id="5.1.3.4"/>
    </reaction>
</comment>
<comment type="cofactor">
    <cofactor evidence="1">
        <name>Zn(2+)</name>
        <dbReference type="ChEBI" id="CHEBI:29105"/>
    </cofactor>
    <text evidence="1">Binds 1 zinc ion per subunit.</text>
</comment>
<comment type="pathway">
    <text evidence="1">Cofactor degradation; L-ascorbate degradation; D-xylulose 5-phosphate from L-ascorbate: step 4/4.</text>
</comment>
<comment type="induction">
    <text evidence="1">Induced by L-ascorbate. Repressed by UlaR.</text>
</comment>
<comment type="similarity">
    <text evidence="1">Belongs to the aldolase class II family. AraD/FucA subfamily.</text>
</comment>
<sequence>MQKLKQQVFEANMDLPRYGLVTFTWGNVSAIDRERGLVVIKPSGVAYETMKADDMVVVDMSGKVVEGAYRPSSDTATHLELYRRCPSLGGIVHTHSTHATAWAQAGLAIPALGTTHADYFFGDIPCTRGLSEEEVQGEYELNTGKVIIETLGNAEPLHTPGIVVYQHGPFAWGKDAHDAVHNAVVMEEVAKMAWIARGINPQLNHIDSFLMNKHFMRKHGPNAYYGQK</sequence>
<gene>
    <name evidence="1" type="primary">ulaF</name>
    <name type="ordered locus">ECIAI1_4431</name>
</gene>
<keyword id="KW-0119">Carbohydrate metabolism</keyword>
<keyword id="KW-0413">Isomerase</keyword>
<keyword id="KW-0479">Metal-binding</keyword>
<keyword id="KW-0862">Zinc</keyword>
<dbReference type="EC" id="5.1.3.4" evidence="1"/>
<dbReference type="EMBL" id="CU928160">
    <property type="protein sequence ID" value="CAR01173.1"/>
    <property type="molecule type" value="Genomic_DNA"/>
</dbReference>
<dbReference type="RefSeq" id="WP_001170797.1">
    <property type="nucleotide sequence ID" value="NC_011741.1"/>
</dbReference>
<dbReference type="SMR" id="B7M9G0"/>
<dbReference type="KEGG" id="ecr:ECIAI1_4431"/>
<dbReference type="HOGENOM" id="CLU_006033_5_0_6"/>
<dbReference type="UniPathway" id="UPA00263">
    <property type="reaction ID" value="UER00380"/>
</dbReference>
<dbReference type="GO" id="GO:0005829">
    <property type="term" value="C:cytosol"/>
    <property type="evidence" value="ECO:0007669"/>
    <property type="project" value="TreeGrafter"/>
</dbReference>
<dbReference type="GO" id="GO:0016832">
    <property type="term" value="F:aldehyde-lyase activity"/>
    <property type="evidence" value="ECO:0007669"/>
    <property type="project" value="TreeGrafter"/>
</dbReference>
<dbReference type="GO" id="GO:0008742">
    <property type="term" value="F:L-ribulose-phosphate 4-epimerase activity"/>
    <property type="evidence" value="ECO:0007669"/>
    <property type="project" value="UniProtKB-UniRule"/>
</dbReference>
<dbReference type="GO" id="GO:0008270">
    <property type="term" value="F:zinc ion binding"/>
    <property type="evidence" value="ECO:0007669"/>
    <property type="project" value="UniProtKB-UniRule"/>
</dbReference>
<dbReference type="GO" id="GO:0019854">
    <property type="term" value="P:L-ascorbic acid catabolic process"/>
    <property type="evidence" value="ECO:0007669"/>
    <property type="project" value="UniProtKB-UniRule"/>
</dbReference>
<dbReference type="GO" id="GO:0019323">
    <property type="term" value="P:pentose catabolic process"/>
    <property type="evidence" value="ECO:0007669"/>
    <property type="project" value="TreeGrafter"/>
</dbReference>
<dbReference type="CDD" id="cd00398">
    <property type="entry name" value="Aldolase_II"/>
    <property type="match status" value="1"/>
</dbReference>
<dbReference type="FunFam" id="3.40.225.10:FF:000001">
    <property type="entry name" value="L-ribulose-5-phosphate 4-epimerase UlaF"/>
    <property type="match status" value="1"/>
</dbReference>
<dbReference type="Gene3D" id="3.40.225.10">
    <property type="entry name" value="Class II aldolase/adducin N-terminal domain"/>
    <property type="match status" value="1"/>
</dbReference>
<dbReference type="HAMAP" id="MF_01952">
    <property type="entry name" value="UlaF"/>
    <property type="match status" value="1"/>
</dbReference>
<dbReference type="InterPro" id="IPR050197">
    <property type="entry name" value="Aldolase_class_II_sugar_metab"/>
</dbReference>
<dbReference type="InterPro" id="IPR001303">
    <property type="entry name" value="Aldolase_II/adducin_N"/>
</dbReference>
<dbReference type="InterPro" id="IPR036409">
    <property type="entry name" value="Aldolase_II/adducin_N_sf"/>
</dbReference>
<dbReference type="InterPro" id="IPR023499">
    <property type="entry name" value="UlaF"/>
</dbReference>
<dbReference type="NCBIfam" id="NF006047">
    <property type="entry name" value="PRK08193.1"/>
    <property type="match status" value="1"/>
</dbReference>
<dbReference type="NCBIfam" id="NF009003">
    <property type="entry name" value="PRK12348.1"/>
    <property type="match status" value="1"/>
</dbReference>
<dbReference type="PANTHER" id="PTHR22789">
    <property type="entry name" value="FUCULOSE PHOSPHATE ALDOLASE"/>
    <property type="match status" value="1"/>
</dbReference>
<dbReference type="PANTHER" id="PTHR22789:SF9">
    <property type="entry name" value="L-RIBULOSE-5-PHOSPHATE 4-EPIMERASE ULAF"/>
    <property type="match status" value="1"/>
</dbReference>
<dbReference type="Pfam" id="PF00596">
    <property type="entry name" value="Aldolase_II"/>
    <property type="match status" value="1"/>
</dbReference>
<dbReference type="SMART" id="SM01007">
    <property type="entry name" value="Aldolase_II"/>
    <property type="match status" value="1"/>
</dbReference>
<dbReference type="SUPFAM" id="SSF53639">
    <property type="entry name" value="AraD/HMP-PK domain-like"/>
    <property type="match status" value="1"/>
</dbReference>
<proteinExistence type="inferred from homology"/>
<name>ULAF_ECO8A</name>
<evidence type="ECO:0000255" key="1">
    <source>
        <dbReference type="HAMAP-Rule" id="MF_01952"/>
    </source>
</evidence>
<organism>
    <name type="scientific">Escherichia coli O8 (strain IAI1)</name>
    <dbReference type="NCBI Taxonomy" id="585034"/>
    <lineage>
        <taxon>Bacteria</taxon>
        <taxon>Pseudomonadati</taxon>
        <taxon>Pseudomonadota</taxon>
        <taxon>Gammaproteobacteria</taxon>
        <taxon>Enterobacterales</taxon>
        <taxon>Enterobacteriaceae</taxon>
        <taxon>Escherichia</taxon>
    </lineage>
</organism>
<reference key="1">
    <citation type="journal article" date="2009" name="PLoS Genet.">
        <title>Organised genome dynamics in the Escherichia coli species results in highly diverse adaptive paths.</title>
        <authorList>
            <person name="Touchon M."/>
            <person name="Hoede C."/>
            <person name="Tenaillon O."/>
            <person name="Barbe V."/>
            <person name="Baeriswyl S."/>
            <person name="Bidet P."/>
            <person name="Bingen E."/>
            <person name="Bonacorsi S."/>
            <person name="Bouchier C."/>
            <person name="Bouvet O."/>
            <person name="Calteau A."/>
            <person name="Chiapello H."/>
            <person name="Clermont O."/>
            <person name="Cruveiller S."/>
            <person name="Danchin A."/>
            <person name="Diard M."/>
            <person name="Dossat C."/>
            <person name="Karoui M.E."/>
            <person name="Frapy E."/>
            <person name="Garry L."/>
            <person name="Ghigo J.M."/>
            <person name="Gilles A.M."/>
            <person name="Johnson J."/>
            <person name="Le Bouguenec C."/>
            <person name="Lescat M."/>
            <person name="Mangenot S."/>
            <person name="Martinez-Jehanne V."/>
            <person name="Matic I."/>
            <person name="Nassif X."/>
            <person name="Oztas S."/>
            <person name="Petit M.A."/>
            <person name="Pichon C."/>
            <person name="Rouy Z."/>
            <person name="Ruf C.S."/>
            <person name="Schneider D."/>
            <person name="Tourret J."/>
            <person name="Vacherie B."/>
            <person name="Vallenet D."/>
            <person name="Medigue C."/>
            <person name="Rocha E.P.C."/>
            <person name="Denamur E."/>
        </authorList>
    </citation>
    <scope>NUCLEOTIDE SEQUENCE [LARGE SCALE GENOMIC DNA]</scope>
    <source>
        <strain>IAI1</strain>
    </source>
</reference>